<keyword id="KW-0044">Antibiotic</keyword>
<keyword id="KW-0929">Antimicrobial</keyword>
<keyword id="KW-0211">Defensin</keyword>
<keyword id="KW-1015">Disulfide bond</keyword>
<keyword id="KW-0472">Membrane</keyword>
<keyword id="KW-0964">Secreted</keyword>
<keyword id="KW-0732">Signal</keyword>
<evidence type="ECO:0000250" key="1"/>
<evidence type="ECO:0000250" key="2">
    <source>
        <dbReference type="UniProtKB" id="Q8N104"/>
    </source>
</evidence>
<evidence type="ECO:0000305" key="3"/>
<dbReference type="EMBL" id="AM410117">
    <property type="protein sequence ID" value="CAL68932.1"/>
    <property type="molecule type" value="Genomic_DNA"/>
</dbReference>
<dbReference type="SMR" id="A4H212"/>
<dbReference type="GO" id="GO:0005576">
    <property type="term" value="C:extracellular region"/>
    <property type="evidence" value="ECO:0007669"/>
    <property type="project" value="UniProtKB-SubCell"/>
</dbReference>
<dbReference type="GO" id="GO:0016020">
    <property type="term" value="C:membrane"/>
    <property type="evidence" value="ECO:0007669"/>
    <property type="project" value="UniProtKB-SubCell"/>
</dbReference>
<dbReference type="GO" id="GO:0042742">
    <property type="term" value="P:defense response to bacterium"/>
    <property type="evidence" value="ECO:0007669"/>
    <property type="project" value="UniProtKB-KW"/>
</dbReference>
<dbReference type="GO" id="GO:0045087">
    <property type="term" value="P:innate immune response"/>
    <property type="evidence" value="ECO:0007669"/>
    <property type="project" value="InterPro"/>
</dbReference>
<dbReference type="Gene3D" id="3.10.360.10">
    <property type="entry name" value="Antimicrobial Peptide, Beta-defensin 2, Chain A"/>
    <property type="match status" value="1"/>
</dbReference>
<dbReference type="InterPro" id="IPR025933">
    <property type="entry name" value="Beta_defensin_dom"/>
</dbReference>
<dbReference type="Pfam" id="PF13841">
    <property type="entry name" value="Defensin_beta_2"/>
    <property type="match status" value="1"/>
</dbReference>
<feature type="signal peptide" evidence="2">
    <location>
        <begin position="1"/>
        <end position="20"/>
    </location>
</feature>
<feature type="peptide" id="PRO_0000289817" description="Beta-defensin 106A">
    <location>
        <begin position="21"/>
        <end position="65"/>
    </location>
</feature>
<feature type="disulfide bond" evidence="2">
    <location>
        <begin position="26"/>
        <end position="53"/>
    </location>
</feature>
<feature type="disulfide bond" evidence="1">
    <location>
        <begin position="33"/>
        <end position="47"/>
    </location>
</feature>
<feature type="disulfide bond" evidence="1">
    <location>
        <begin position="37"/>
        <end position="54"/>
    </location>
</feature>
<sequence length="65" mass="7370">MRTFLFLFAVLFFLTPAKNEFFDEKCGKLKGTCKNNCGKNEELIALCQKSLKCCRTIQPCGSIID</sequence>
<organism>
    <name type="scientific">Pongo pygmaeus</name>
    <name type="common">Bornean orangutan</name>
    <dbReference type="NCBI Taxonomy" id="9600"/>
    <lineage>
        <taxon>Eukaryota</taxon>
        <taxon>Metazoa</taxon>
        <taxon>Chordata</taxon>
        <taxon>Craniata</taxon>
        <taxon>Vertebrata</taxon>
        <taxon>Euteleostomi</taxon>
        <taxon>Mammalia</taxon>
        <taxon>Eutheria</taxon>
        <taxon>Euarchontoglires</taxon>
        <taxon>Primates</taxon>
        <taxon>Haplorrhini</taxon>
        <taxon>Catarrhini</taxon>
        <taxon>Hominidae</taxon>
        <taxon>Pongo</taxon>
    </lineage>
</organism>
<comment type="function">
    <text evidence="2">Has antibacterial activity. Acts as a ligand for C-C chemokine receptor CCR2.</text>
</comment>
<comment type="subunit">
    <text evidence="2">Monomer. Interacts with CCR2 (via extracellular N-terminal region); this interaction may preferentially require specific tyrosine sulfation on CCR2.</text>
</comment>
<comment type="subcellular location">
    <subcellularLocation>
        <location evidence="2">Secreted</location>
    </subcellularLocation>
    <subcellularLocation>
        <location evidence="2">Membrane</location>
    </subcellularLocation>
    <text evidence="2">Associates with tumor cell membrane-derived microvesicles.</text>
</comment>
<comment type="similarity">
    <text evidence="3">Belongs to the beta-defensin family.</text>
</comment>
<proteinExistence type="inferred from homology"/>
<name>D106A_PONPY</name>
<gene>
    <name type="primary">DEFB106A</name>
    <name type="synonym">DEFB106</name>
</gene>
<accession>A4H212</accession>
<reference key="1">
    <citation type="submission" date="2006-11" db="EMBL/GenBank/DDBJ databases">
        <title>Evolution and sequence variation of human beta-defensin genes.</title>
        <authorList>
            <person name="Hollox E.J."/>
            <person name="Armour J.A.L."/>
        </authorList>
    </citation>
    <scope>NUCLEOTIDE SEQUENCE [GENOMIC DNA]</scope>
</reference>
<protein>
    <recommendedName>
        <fullName>Beta-defensin 106A</fullName>
    </recommendedName>
    <alternativeName>
        <fullName>Defensin, beta 106</fullName>
    </alternativeName>
    <alternativeName>
        <fullName>Defensin, beta 106A</fullName>
    </alternativeName>
</protein>